<dbReference type="EC" id="6.3.2.1" evidence="1"/>
<dbReference type="EMBL" id="CP000449">
    <property type="protein sequence ID" value="ABI66013.1"/>
    <property type="molecule type" value="Genomic_DNA"/>
</dbReference>
<dbReference type="RefSeq" id="WP_011643659.1">
    <property type="nucleotide sequence ID" value="NC_008347.1"/>
</dbReference>
<dbReference type="SMR" id="Q0ANX4"/>
<dbReference type="STRING" id="394221.Mmar10_1721"/>
<dbReference type="KEGG" id="mmr:Mmar10_1721"/>
<dbReference type="eggNOG" id="COG0414">
    <property type="taxonomic scope" value="Bacteria"/>
</dbReference>
<dbReference type="HOGENOM" id="CLU_047148_0_0_5"/>
<dbReference type="OrthoDB" id="9773087at2"/>
<dbReference type="UniPathway" id="UPA00028">
    <property type="reaction ID" value="UER00005"/>
</dbReference>
<dbReference type="Proteomes" id="UP000001964">
    <property type="component" value="Chromosome"/>
</dbReference>
<dbReference type="GO" id="GO:0005829">
    <property type="term" value="C:cytosol"/>
    <property type="evidence" value="ECO:0007669"/>
    <property type="project" value="TreeGrafter"/>
</dbReference>
<dbReference type="GO" id="GO:0005524">
    <property type="term" value="F:ATP binding"/>
    <property type="evidence" value="ECO:0007669"/>
    <property type="project" value="UniProtKB-KW"/>
</dbReference>
<dbReference type="GO" id="GO:0004592">
    <property type="term" value="F:pantoate-beta-alanine ligase activity"/>
    <property type="evidence" value="ECO:0007669"/>
    <property type="project" value="UniProtKB-UniRule"/>
</dbReference>
<dbReference type="GO" id="GO:0015940">
    <property type="term" value="P:pantothenate biosynthetic process"/>
    <property type="evidence" value="ECO:0007669"/>
    <property type="project" value="UniProtKB-UniRule"/>
</dbReference>
<dbReference type="CDD" id="cd00560">
    <property type="entry name" value="PanC"/>
    <property type="match status" value="1"/>
</dbReference>
<dbReference type="FunFam" id="3.40.50.620:FF:000114">
    <property type="entry name" value="Pantothenate synthetase"/>
    <property type="match status" value="1"/>
</dbReference>
<dbReference type="Gene3D" id="3.40.50.620">
    <property type="entry name" value="HUPs"/>
    <property type="match status" value="1"/>
</dbReference>
<dbReference type="Gene3D" id="3.30.1300.10">
    <property type="entry name" value="Pantoate-beta-alanine ligase, C-terminal domain"/>
    <property type="match status" value="1"/>
</dbReference>
<dbReference type="HAMAP" id="MF_00158">
    <property type="entry name" value="PanC"/>
    <property type="match status" value="1"/>
</dbReference>
<dbReference type="InterPro" id="IPR004821">
    <property type="entry name" value="Cyt_trans-like"/>
</dbReference>
<dbReference type="InterPro" id="IPR003721">
    <property type="entry name" value="Pantoate_ligase"/>
</dbReference>
<dbReference type="InterPro" id="IPR042176">
    <property type="entry name" value="Pantoate_ligase_C"/>
</dbReference>
<dbReference type="InterPro" id="IPR014729">
    <property type="entry name" value="Rossmann-like_a/b/a_fold"/>
</dbReference>
<dbReference type="NCBIfam" id="TIGR00125">
    <property type="entry name" value="cyt_tran_rel"/>
    <property type="match status" value="1"/>
</dbReference>
<dbReference type="NCBIfam" id="TIGR00018">
    <property type="entry name" value="panC"/>
    <property type="match status" value="1"/>
</dbReference>
<dbReference type="PANTHER" id="PTHR21299">
    <property type="entry name" value="CYTIDYLATE KINASE/PANTOATE-BETA-ALANINE LIGASE"/>
    <property type="match status" value="1"/>
</dbReference>
<dbReference type="PANTHER" id="PTHR21299:SF1">
    <property type="entry name" value="PANTOATE--BETA-ALANINE LIGASE"/>
    <property type="match status" value="1"/>
</dbReference>
<dbReference type="Pfam" id="PF02569">
    <property type="entry name" value="Pantoate_ligase"/>
    <property type="match status" value="1"/>
</dbReference>
<dbReference type="SUPFAM" id="SSF52374">
    <property type="entry name" value="Nucleotidylyl transferase"/>
    <property type="match status" value="1"/>
</dbReference>
<sequence length="288" mass="30943">MITQQIPHATTISALRTRVRSWREDRLSVGFVPTMGALHDGHVSLVRLAKAQCDRVVASVFVNPKQFAPGEDLDAYPRTLIDDAEKLTDAKCDLIYLPTPEAMYPDGYSAGVTLKGPALGLESAIRPHFFDGVATVVTKLFNQVRPDMAFFGEKDYQQLLVIRQLVKDLDFPINVLAGETGRDRDGLALSSRNAYLDSDQRTRAGQLNLILKAFAAALSGGASTSDATATALAAASDAFDAVDYVEARCAATLAELGDGPIDRPVRVLAAVRLGSTRLIDNMAANPPA</sequence>
<keyword id="KW-0067">ATP-binding</keyword>
<keyword id="KW-0963">Cytoplasm</keyword>
<keyword id="KW-0436">Ligase</keyword>
<keyword id="KW-0547">Nucleotide-binding</keyword>
<keyword id="KW-0566">Pantothenate biosynthesis</keyword>
<keyword id="KW-1185">Reference proteome</keyword>
<reference key="1">
    <citation type="submission" date="2006-08" db="EMBL/GenBank/DDBJ databases">
        <title>Complete sequence of Maricaulis maris MCS10.</title>
        <authorList>
            <consortium name="US DOE Joint Genome Institute"/>
            <person name="Copeland A."/>
            <person name="Lucas S."/>
            <person name="Lapidus A."/>
            <person name="Barry K."/>
            <person name="Detter J.C."/>
            <person name="Glavina del Rio T."/>
            <person name="Hammon N."/>
            <person name="Israni S."/>
            <person name="Dalin E."/>
            <person name="Tice H."/>
            <person name="Pitluck S."/>
            <person name="Saunders E."/>
            <person name="Brettin T."/>
            <person name="Bruce D."/>
            <person name="Han C."/>
            <person name="Tapia R."/>
            <person name="Gilna P."/>
            <person name="Schmutz J."/>
            <person name="Larimer F."/>
            <person name="Land M."/>
            <person name="Hauser L."/>
            <person name="Kyrpides N."/>
            <person name="Mikhailova N."/>
            <person name="Viollier P."/>
            <person name="Stephens C."/>
            <person name="Richardson P."/>
        </authorList>
    </citation>
    <scope>NUCLEOTIDE SEQUENCE [LARGE SCALE GENOMIC DNA]</scope>
    <source>
        <strain>MCS10</strain>
    </source>
</reference>
<organism>
    <name type="scientific">Maricaulis maris (strain MCS10)</name>
    <name type="common">Caulobacter maris</name>
    <dbReference type="NCBI Taxonomy" id="394221"/>
    <lineage>
        <taxon>Bacteria</taxon>
        <taxon>Pseudomonadati</taxon>
        <taxon>Pseudomonadota</taxon>
        <taxon>Alphaproteobacteria</taxon>
        <taxon>Maricaulales</taxon>
        <taxon>Maricaulaceae</taxon>
        <taxon>Maricaulis</taxon>
    </lineage>
</organism>
<evidence type="ECO:0000255" key="1">
    <source>
        <dbReference type="HAMAP-Rule" id="MF_00158"/>
    </source>
</evidence>
<feature type="chain" id="PRO_0000305479" description="Pantothenate synthetase">
    <location>
        <begin position="1"/>
        <end position="288"/>
    </location>
</feature>
<feature type="active site" description="Proton donor" evidence="1">
    <location>
        <position position="42"/>
    </location>
</feature>
<feature type="binding site" evidence="1">
    <location>
        <begin position="35"/>
        <end position="42"/>
    </location>
    <ligand>
        <name>ATP</name>
        <dbReference type="ChEBI" id="CHEBI:30616"/>
    </ligand>
</feature>
<feature type="binding site" evidence="1">
    <location>
        <position position="66"/>
    </location>
    <ligand>
        <name>(R)-pantoate</name>
        <dbReference type="ChEBI" id="CHEBI:15980"/>
    </ligand>
</feature>
<feature type="binding site" evidence="1">
    <location>
        <position position="66"/>
    </location>
    <ligand>
        <name>beta-alanine</name>
        <dbReference type="ChEBI" id="CHEBI:57966"/>
    </ligand>
</feature>
<feature type="binding site" evidence="1">
    <location>
        <begin position="152"/>
        <end position="155"/>
    </location>
    <ligand>
        <name>ATP</name>
        <dbReference type="ChEBI" id="CHEBI:30616"/>
    </ligand>
</feature>
<feature type="binding site" evidence="1">
    <location>
        <position position="158"/>
    </location>
    <ligand>
        <name>(R)-pantoate</name>
        <dbReference type="ChEBI" id="CHEBI:15980"/>
    </ligand>
</feature>
<feature type="binding site" evidence="1">
    <location>
        <position position="181"/>
    </location>
    <ligand>
        <name>ATP</name>
        <dbReference type="ChEBI" id="CHEBI:30616"/>
    </ligand>
</feature>
<feature type="binding site" evidence="1">
    <location>
        <begin position="189"/>
        <end position="192"/>
    </location>
    <ligand>
        <name>ATP</name>
        <dbReference type="ChEBI" id="CHEBI:30616"/>
    </ligand>
</feature>
<accession>Q0ANX4</accession>
<gene>
    <name evidence="1" type="primary">panC</name>
    <name type="ordered locus">Mmar10_1721</name>
</gene>
<proteinExistence type="inferred from homology"/>
<comment type="function">
    <text evidence="1">Catalyzes the condensation of pantoate with beta-alanine in an ATP-dependent reaction via a pantoyl-adenylate intermediate.</text>
</comment>
<comment type="catalytic activity">
    <reaction evidence="1">
        <text>(R)-pantoate + beta-alanine + ATP = (R)-pantothenate + AMP + diphosphate + H(+)</text>
        <dbReference type="Rhea" id="RHEA:10912"/>
        <dbReference type="ChEBI" id="CHEBI:15378"/>
        <dbReference type="ChEBI" id="CHEBI:15980"/>
        <dbReference type="ChEBI" id="CHEBI:29032"/>
        <dbReference type="ChEBI" id="CHEBI:30616"/>
        <dbReference type="ChEBI" id="CHEBI:33019"/>
        <dbReference type="ChEBI" id="CHEBI:57966"/>
        <dbReference type="ChEBI" id="CHEBI:456215"/>
        <dbReference type="EC" id="6.3.2.1"/>
    </reaction>
</comment>
<comment type="pathway">
    <text evidence="1">Cofactor biosynthesis; (R)-pantothenate biosynthesis; (R)-pantothenate from (R)-pantoate and beta-alanine: step 1/1.</text>
</comment>
<comment type="subunit">
    <text evidence="1">Homodimer.</text>
</comment>
<comment type="subcellular location">
    <subcellularLocation>
        <location evidence="1">Cytoplasm</location>
    </subcellularLocation>
</comment>
<comment type="miscellaneous">
    <text evidence="1">The reaction proceeds by a bi uni uni bi ping pong mechanism.</text>
</comment>
<comment type="similarity">
    <text evidence="1">Belongs to the pantothenate synthetase family.</text>
</comment>
<protein>
    <recommendedName>
        <fullName evidence="1">Pantothenate synthetase</fullName>
        <shortName evidence="1">PS</shortName>
        <ecNumber evidence="1">6.3.2.1</ecNumber>
    </recommendedName>
    <alternativeName>
        <fullName evidence="1">Pantoate--beta-alanine ligase</fullName>
    </alternativeName>
    <alternativeName>
        <fullName evidence="1">Pantoate-activating enzyme</fullName>
    </alternativeName>
</protein>
<name>PANC_MARMM</name>